<name>HIR3_YEAST</name>
<proteinExistence type="evidence at protein level"/>
<dbReference type="EMBL" id="Z49640">
    <property type="protein sequence ID" value="CAA89672.1"/>
    <property type="molecule type" value="Genomic_DNA"/>
</dbReference>
<dbReference type="EMBL" id="Z49641">
    <property type="protein sequence ID" value="CAA89674.1"/>
    <property type="molecule type" value="Genomic_DNA"/>
</dbReference>
<dbReference type="EMBL" id="BK006943">
    <property type="protein sequence ID" value="DAA08925.1"/>
    <property type="molecule type" value="Genomic_DNA"/>
</dbReference>
<dbReference type="PIR" id="S57163">
    <property type="entry name" value="S57163"/>
</dbReference>
<dbReference type="RefSeq" id="NP_012674.1">
    <property type="nucleotide sequence ID" value="NM_001181798.1"/>
</dbReference>
<dbReference type="PDB" id="8GHA">
    <property type="method" value="EM"/>
    <property type="resolution" value="6.80 A"/>
    <property type="chains" value="D=1-1648"/>
</dbReference>
<dbReference type="PDB" id="8GHL">
    <property type="method" value="EM"/>
    <property type="resolution" value="2.96 A"/>
    <property type="chains" value="D/J=1-1648"/>
</dbReference>
<dbReference type="PDB" id="8GHM">
    <property type="method" value="EM"/>
    <property type="resolution" value="12.00 A"/>
    <property type="chains" value="D/J=1-1648"/>
</dbReference>
<dbReference type="PDB" id="8GHN">
    <property type="method" value="EM"/>
    <property type="resolution" value="2.96 A"/>
    <property type="chains" value="D/J=1-1648"/>
</dbReference>
<dbReference type="PDBsum" id="8GHA"/>
<dbReference type="PDBsum" id="8GHL"/>
<dbReference type="PDBsum" id="8GHM"/>
<dbReference type="PDBsum" id="8GHN"/>
<dbReference type="SMR" id="P47171"/>
<dbReference type="BioGRID" id="33896">
    <property type="interactions" value="367"/>
</dbReference>
<dbReference type="ComplexPortal" id="CPX-124">
    <property type="entry name" value="HIR complex"/>
</dbReference>
<dbReference type="DIP" id="DIP-2631N"/>
<dbReference type="FunCoup" id="P47171">
    <property type="interactions" value="203"/>
</dbReference>
<dbReference type="IntAct" id="P47171">
    <property type="interactions" value="9"/>
</dbReference>
<dbReference type="MINT" id="P47171"/>
<dbReference type="STRING" id="4932.YJR140C"/>
<dbReference type="iPTMnet" id="P47171"/>
<dbReference type="PaxDb" id="4932-YJR140C"/>
<dbReference type="PeptideAtlas" id="P47171"/>
<dbReference type="EnsemblFungi" id="YJR140C_mRNA">
    <property type="protein sequence ID" value="YJR140C"/>
    <property type="gene ID" value="YJR140C"/>
</dbReference>
<dbReference type="GeneID" id="853605"/>
<dbReference type="KEGG" id="sce:YJR140C"/>
<dbReference type="AGR" id="SGD:S000003901"/>
<dbReference type="SGD" id="S000003901">
    <property type="gene designation" value="HIR3"/>
</dbReference>
<dbReference type="VEuPathDB" id="FungiDB:YJR140C"/>
<dbReference type="eggNOG" id="ENOG502QQX4">
    <property type="taxonomic scope" value="Eukaryota"/>
</dbReference>
<dbReference type="HOGENOM" id="CLU_001316_0_0_1"/>
<dbReference type="InParanoid" id="P47171"/>
<dbReference type="OMA" id="WETWYRL"/>
<dbReference type="OrthoDB" id="77564at2759"/>
<dbReference type="BioCyc" id="YEAST:G3O-31755-MONOMER"/>
<dbReference type="Reactome" id="R-SCE-2559584">
    <property type="pathway name" value="Formation of Senescence-Associated Heterochromatin Foci (SAHF)"/>
</dbReference>
<dbReference type="BioGRID-ORCS" id="853605">
    <property type="hits" value="0 hits in 10 CRISPR screens"/>
</dbReference>
<dbReference type="PRO" id="PR:P47171"/>
<dbReference type="Proteomes" id="UP000002311">
    <property type="component" value="Chromosome X"/>
</dbReference>
<dbReference type="RNAct" id="P47171">
    <property type="molecule type" value="protein"/>
</dbReference>
<dbReference type="GO" id="GO:0005694">
    <property type="term" value="C:chromosome"/>
    <property type="evidence" value="ECO:0007669"/>
    <property type="project" value="UniProtKB-SubCell"/>
</dbReference>
<dbReference type="GO" id="GO:0000417">
    <property type="term" value="C:HIR complex"/>
    <property type="evidence" value="ECO:0000314"/>
    <property type="project" value="SGD"/>
</dbReference>
<dbReference type="GO" id="GO:0005634">
    <property type="term" value="C:nucleus"/>
    <property type="evidence" value="ECO:0000314"/>
    <property type="project" value="SGD"/>
</dbReference>
<dbReference type="GO" id="GO:0003714">
    <property type="term" value="F:transcription corepressor activity"/>
    <property type="evidence" value="ECO:0000315"/>
    <property type="project" value="SGD"/>
</dbReference>
<dbReference type="GO" id="GO:0006325">
    <property type="term" value="P:chromatin organization"/>
    <property type="evidence" value="ECO:0000314"/>
    <property type="project" value="SGD"/>
</dbReference>
<dbReference type="GO" id="GO:0000082">
    <property type="term" value="P:G1/S transition of mitotic cell cycle"/>
    <property type="evidence" value="ECO:0000315"/>
    <property type="project" value="SGD"/>
</dbReference>
<dbReference type="GO" id="GO:1905268">
    <property type="term" value="P:negative regulation of chromatin organization"/>
    <property type="evidence" value="ECO:0000314"/>
    <property type="project" value="ComplexPortal"/>
</dbReference>
<dbReference type="GO" id="GO:0000122">
    <property type="term" value="P:negative regulation of transcription by RNA polymerase II"/>
    <property type="evidence" value="ECO:0000315"/>
    <property type="project" value="SGD"/>
</dbReference>
<dbReference type="GO" id="GO:0006334">
    <property type="term" value="P:nucleosome assembly"/>
    <property type="evidence" value="ECO:0000314"/>
    <property type="project" value="ComplexPortal"/>
</dbReference>
<dbReference type="GO" id="GO:0006368">
    <property type="term" value="P:transcription elongation by RNA polymerase II"/>
    <property type="evidence" value="ECO:0000316"/>
    <property type="project" value="SGD"/>
</dbReference>
<dbReference type="InterPro" id="IPR033053">
    <property type="entry name" value="Hir3/CABIN1"/>
</dbReference>
<dbReference type="PANTHER" id="PTHR15502">
    <property type="entry name" value="CALCINEURIN-BINDING PROTEIN CABIN 1-RELATED"/>
    <property type="match status" value="1"/>
</dbReference>
<dbReference type="PANTHER" id="PTHR15502:SF7">
    <property type="entry name" value="CALCINEURIN-BINDING PROTEIN CABIN-1"/>
    <property type="match status" value="1"/>
</dbReference>
<protein>
    <recommendedName>
        <fullName>Histone transcription regulator 3</fullName>
    </recommendedName>
</protein>
<organism>
    <name type="scientific">Saccharomyces cerevisiae (strain ATCC 204508 / S288c)</name>
    <name type="common">Baker's yeast</name>
    <dbReference type="NCBI Taxonomy" id="559292"/>
    <lineage>
        <taxon>Eukaryota</taxon>
        <taxon>Fungi</taxon>
        <taxon>Dikarya</taxon>
        <taxon>Ascomycota</taxon>
        <taxon>Saccharomycotina</taxon>
        <taxon>Saccharomycetes</taxon>
        <taxon>Saccharomycetales</taxon>
        <taxon>Saccharomycetaceae</taxon>
        <taxon>Saccharomyces</taxon>
    </lineage>
</organism>
<reference key="1">
    <citation type="journal article" date="1996" name="EMBO J.">
        <title>Complete nucleotide sequence of Saccharomyces cerevisiae chromosome X.</title>
        <authorList>
            <person name="Galibert F."/>
            <person name="Alexandraki D."/>
            <person name="Baur A."/>
            <person name="Boles E."/>
            <person name="Chalwatzis N."/>
            <person name="Chuat J.-C."/>
            <person name="Coster F."/>
            <person name="Cziepluch C."/>
            <person name="de Haan M."/>
            <person name="Domdey H."/>
            <person name="Durand P."/>
            <person name="Entian K.-D."/>
            <person name="Gatius M."/>
            <person name="Goffeau A."/>
            <person name="Grivell L.A."/>
            <person name="Hennemann A."/>
            <person name="Herbert C.J."/>
            <person name="Heumann K."/>
            <person name="Hilger F."/>
            <person name="Hollenberg C.P."/>
            <person name="Huang M.-E."/>
            <person name="Jacq C."/>
            <person name="Jauniaux J.-C."/>
            <person name="Katsoulou C."/>
            <person name="Kirchrath L."/>
            <person name="Kleine K."/>
            <person name="Kordes E."/>
            <person name="Koetter P."/>
            <person name="Liebl S."/>
            <person name="Louis E.J."/>
            <person name="Manus V."/>
            <person name="Mewes H.-W."/>
            <person name="Miosga T."/>
            <person name="Obermaier B."/>
            <person name="Perea J."/>
            <person name="Pohl T.M."/>
            <person name="Portetelle D."/>
            <person name="Pujol A."/>
            <person name="Purnelle B."/>
            <person name="Ramezani Rad M."/>
            <person name="Rasmussen S.W."/>
            <person name="Rose M."/>
            <person name="Rossau R."/>
            <person name="Schaaff-Gerstenschlaeger I."/>
            <person name="Smits P.H.M."/>
            <person name="Scarcez T."/>
            <person name="Soriano N."/>
            <person name="To Van D."/>
            <person name="Tzermia M."/>
            <person name="Van Broekhoven A."/>
            <person name="Vandenbol M."/>
            <person name="Wedler H."/>
            <person name="von Wettstein D."/>
            <person name="Wambutt R."/>
            <person name="Zagulski M."/>
            <person name="Zollner A."/>
            <person name="Karpfinger-Hartl L."/>
        </authorList>
    </citation>
    <scope>NUCLEOTIDE SEQUENCE [LARGE SCALE GENOMIC DNA]</scope>
    <source>
        <strain>ATCC 204508 / S288c</strain>
    </source>
</reference>
<reference key="2">
    <citation type="journal article" date="2014" name="G3 (Bethesda)">
        <title>The reference genome sequence of Saccharomyces cerevisiae: Then and now.</title>
        <authorList>
            <person name="Engel S.R."/>
            <person name="Dietrich F.S."/>
            <person name="Fisk D.G."/>
            <person name="Binkley G."/>
            <person name="Balakrishnan R."/>
            <person name="Costanzo M.C."/>
            <person name="Dwight S.S."/>
            <person name="Hitz B.C."/>
            <person name="Karra K."/>
            <person name="Nash R.S."/>
            <person name="Weng S."/>
            <person name="Wong E.D."/>
            <person name="Lloyd P."/>
            <person name="Skrzypek M.S."/>
            <person name="Miyasato S.R."/>
            <person name="Simison M."/>
            <person name="Cherry J.M."/>
        </authorList>
    </citation>
    <scope>GENOME REANNOTATION</scope>
    <source>
        <strain>ATCC 204508 / S288c</strain>
    </source>
</reference>
<reference key="3">
    <citation type="journal article" date="1997" name="Mol. Cell. Biol.">
        <title>Hir1p and Hir2p function as transcriptional corepressors to regulate histone gene transcription in the Saccharomyces cerevisiae cell cycle.</title>
        <authorList>
            <person name="Spector M.S."/>
            <person name="Raff A."/>
            <person name="DeSilva H."/>
            <person name="Lee K."/>
            <person name="Osley M.A."/>
        </authorList>
    </citation>
    <scope>FUNCTION</scope>
</reference>
<reference key="4">
    <citation type="journal article" date="1998" name="Mol. Cell. Biol.">
        <title>Yeast Ty1 retrotransposition is stimulated by a synergistic interaction between mutations in chromatin assembly factor I and histone regulatory proteins.</title>
        <authorList>
            <person name="Qian Z."/>
            <person name="Huang H."/>
            <person name="Hong J.Y."/>
            <person name="Burck C.L."/>
            <person name="Johnston S.D."/>
            <person name="Berman J."/>
            <person name="Carol A."/>
            <person name="Liebman S.W."/>
        </authorList>
    </citation>
    <scope>SUBCELLULAR LOCATION</scope>
</reference>
<reference key="5">
    <citation type="journal article" date="2002" name="Genetics">
        <title>Defects in SPT16 or POB3 (yFACT) in Saccharomyces cerevisiae cause dependence on the Hir/Hpc pathway: polymerase passage may degrade chromatin structure.</title>
        <authorList>
            <person name="Formosa T."/>
            <person name="Ruone S."/>
            <person name="Adams M.D."/>
            <person name="Olsen A.E."/>
            <person name="Eriksson P."/>
            <person name="Yu Y."/>
            <person name="Rhoades A.R."/>
            <person name="Kaufman P.D."/>
            <person name="Stillman D.J."/>
        </authorList>
    </citation>
    <scope>FUNCTION</scope>
</reference>
<reference key="6">
    <citation type="journal article" date="2003" name="Nature">
        <title>Global analysis of protein expression in yeast.</title>
        <authorList>
            <person name="Ghaemmaghami S."/>
            <person name="Huh W.-K."/>
            <person name="Bower K."/>
            <person name="Howson R.W."/>
            <person name="Belle A."/>
            <person name="Dephoure N."/>
            <person name="O'Shea E.K."/>
            <person name="Weissman J.S."/>
        </authorList>
    </citation>
    <scope>LEVEL OF PROTEIN EXPRESSION [LARGE SCALE ANALYSIS]</scope>
</reference>
<reference key="7">
    <citation type="journal article" date="2005" name="Curr. Biol.">
        <title>Replication-independent histone deposition by the HIR complex and Asf1.</title>
        <authorList>
            <person name="Green E.M."/>
            <person name="Antczak A.J."/>
            <person name="Bailey A.O."/>
            <person name="Franco A.A."/>
            <person name="Wu K.J."/>
            <person name="Yates J.R. III"/>
            <person name="Kaufman P.D."/>
        </authorList>
    </citation>
    <scope>IDENTIFICATION IN A COMPLEX WITH HIR1; HIR2 AND HPC2</scope>
    <scope>INTERACTION WITH ASF1</scope>
</reference>
<reference key="8">
    <citation type="journal article" date="2005" name="Genes Dev.">
        <title>The HIR corepressor complex binds to nucleosomes generating a distinct protein/DNA complex resistant to remodeling by SWI/SNF.</title>
        <authorList>
            <person name="Prochasson P."/>
            <person name="Florens L."/>
            <person name="Swanson S.K."/>
            <person name="Washburn M.P."/>
            <person name="Workman J.L."/>
        </authorList>
    </citation>
    <scope>IDENTIFICATION IN A COMPLEX WITH HIR1; HIR2 AND HPC2</scope>
</reference>
<reference key="9">
    <citation type="journal article" date="2008" name="Mol. Cell. Proteomics">
        <title>A multidimensional chromatography technology for in-depth phosphoproteome analysis.</title>
        <authorList>
            <person name="Albuquerque C.P."/>
            <person name="Smolka M.B."/>
            <person name="Payne S.H."/>
            <person name="Bafna V."/>
            <person name="Eng J."/>
            <person name="Zhou H."/>
        </authorList>
    </citation>
    <scope>PHOSPHORYLATION [LARGE SCALE ANALYSIS] AT THR-302</scope>
    <scope>IDENTIFICATION BY MASS SPECTROMETRY [LARGE SCALE ANALYSIS]</scope>
</reference>
<reference key="10">
    <citation type="journal article" date="2009" name="Mol. Cell">
        <title>Two-color cell array screen reveals interdependent roles for histone chaperones and a chromatin boundary regulator in histone gene repression.</title>
        <authorList>
            <person name="Fillingham J."/>
            <person name="Kainth P."/>
            <person name="Lambert J.P."/>
            <person name="van Bakel H."/>
            <person name="Tsui K."/>
            <person name="Pena-Castillo L."/>
            <person name="Nislow C."/>
            <person name="Figeys D."/>
            <person name="Hughes T.R."/>
            <person name="Greenblatt J."/>
            <person name="Andrews B.J."/>
        </authorList>
    </citation>
    <scope>INTERACTION WITH RTT106</scope>
    <scope>SUBCELLULAR LOCATION</scope>
    <scope>DISRUPTION PHENOTYPE</scope>
</reference>
<reference key="11">
    <citation type="journal article" date="2009" name="Science">
        <title>Global analysis of Cdk1 substrate phosphorylation sites provides insights into evolution.</title>
        <authorList>
            <person name="Holt L.J."/>
            <person name="Tuch B.B."/>
            <person name="Villen J."/>
            <person name="Johnson A.D."/>
            <person name="Gygi S.P."/>
            <person name="Morgan D.O."/>
        </authorList>
    </citation>
    <scope>PHOSPHORYLATION [LARGE SCALE ANALYSIS] AT SER-304</scope>
    <scope>IDENTIFICATION BY MASS SPECTROMETRY [LARGE SCALE ANALYSIS]</scope>
</reference>
<gene>
    <name type="primary">HIR3</name>
    <name type="synonym">HPC1</name>
    <name type="ordered locus">YJR140C</name>
    <name type="ORF">J2161</name>
</gene>
<comment type="function">
    <text evidence="2 7">HIR1, HIR2 and HIR3 are repressors of histone gene transcription. They are required for the periodic repression of three of the four histone gene loci during cell cycle as well as for autogenous regulation of the HTA1-HTB1 locus by H2A and H2B. Also has a role in nucleosome assembly.</text>
</comment>
<comment type="subunit">
    <text evidence="4 5 6">Component of the HIR complex, composed of HIR1, HIR2, HIR3 and HPC2 (PubMed:16264190, PubMed:16303565). This complex may consist of one copy of HIR1 and HIR3 and two copies of HIR2 and HPC2 (PubMed:16264190). The HIR complex interacts with ASF1 (PubMed:16303565). Interacts with RTT106 (PubMed:19683497).</text>
</comment>
<comment type="interaction">
    <interactant intactId="EBI-25715">
        <id>P47171</id>
    </interactant>
    <interactant intactId="EBI-8323">
        <id>P32480</id>
        <label>HIR2</label>
    </interactant>
    <organismsDiffer>false</organismsDiffer>
    <experiments>3</experiments>
</comment>
<comment type="subcellular location">
    <subcellularLocation>
        <location evidence="8">Nucleus</location>
    </subcellularLocation>
    <subcellularLocation>
        <location evidence="6">Chromosome</location>
    </subcellularLocation>
    <text evidence="6">Localizes to the promoter region of histones HTA1-HTB1.</text>
</comment>
<comment type="disruption phenotype">
    <text evidence="6">Abolishes localization of RTT106 to the HTA1-HTB1 promoter.</text>
</comment>
<comment type="miscellaneous">
    <text evidence="3">Present with 922 molecules/cell in log phase SD medium.</text>
</comment>
<comment type="similarity">
    <text evidence="9">Belongs to the HIR3 family.</text>
</comment>
<feature type="chain" id="PRO_0000203124" description="Histone transcription regulator 3">
    <location>
        <begin position="1"/>
        <end position="1648"/>
    </location>
</feature>
<feature type="region of interest" description="Disordered" evidence="1">
    <location>
        <begin position="301"/>
        <end position="371"/>
    </location>
</feature>
<feature type="region of interest" description="Disordered" evidence="1">
    <location>
        <begin position="1597"/>
        <end position="1630"/>
    </location>
</feature>
<feature type="compositionally biased region" description="Basic and acidic residues" evidence="1">
    <location>
        <begin position="339"/>
        <end position="353"/>
    </location>
</feature>
<feature type="compositionally biased region" description="Polar residues" evidence="1">
    <location>
        <begin position="1597"/>
        <end position="1610"/>
    </location>
</feature>
<feature type="compositionally biased region" description="Low complexity" evidence="1">
    <location>
        <begin position="1611"/>
        <end position="1625"/>
    </location>
</feature>
<feature type="modified residue" description="Phosphothreonine" evidence="10">
    <location>
        <position position="302"/>
    </location>
</feature>
<feature type="modified residue" description="Phosphoserine" evidence="11">
    <location>
        <position position="304"/>
    </location>
</feature>
<feature type="helix" evidence="12">
    <location>
        <begin position="12"/>
        <end position="42"/>
    </location>
</feature>
<feature type="helix" evidence="12">
    <location>
        <begin position="46"/>
        <end position="56"/>
    </location>
</feature>
<feature type="turn" evidence="12">
    <location>
        <begin position="60"/>
        <end position="62"/>
    </location>
</feature>
<feature type="helix" evidence="12">
    <location>
        <begin position="75"/>
        <end position="99"/>
    </location>
</feature>
<feature type="helix" evidence="12">
    <location>
        <begin position="100"/>
        <end position="102"/>
    </location>
</feature>
<feature type="helix" evidence="12">
    <location>
        <begin position="105"/>
        <end position="125"/>
    </location>
</feature>
<feature type="helix" evidence="12">
    <location>
        <begin position="130"/>
        <end position="142"/>
    </location>
</feature>
<feature type="helix" evidence="12">
    <location>
        <begin position="146"/>
        <end position="157"/>
    </location>
</feature>
<feature type="helix" evidence="12">
    <location>
        <begin position="160"/>
        <end position="166"/>
    </location>
</feature>
<feature type="helix" evidence="12">
    <location>
        <begin position="176"/>
        <end position="191"/>
    </location>
</feature>
<feature type="turn" evidence="12">
    <location>
        <begin position="192"/>
        <end position="196"/>
    </location>
</feature>
<feature type="strand" evidence="13">
    <location>
        <begin position="198"/>
        <end position="200"/>
    </location>
</feature>
<feature type="helix" evidence="12">
    <location>
        <begin position="202"/>
        <end position="205"/>
    </location>
</feature>
<feature type="helix" evidence="13">
    <location>
        <begin position="208"/>
        <end position="210"/>
    </location>
</feature>
<feature type="helix" evidence="12">
    <location>
        <begin position="223"/>
        <end position="239"/>
    </location>
</feature>
<feature type="strand" evidence="12">
    <location>
        <begin position="244"/>
        <end position="253"/>
    </location>
</feature>
<feature type="helix" evidence="12">
    <location>
        <begin position="254"/>
        <end position="264"/>
    </location>
</feature>
<feature type="helix" evidence="12">
    <location>
        <begin position="270"/>
        <end position="275"/>
    </location>
</feature>
<feature type="helix" evidence="12">
    <location>
        <begin position="280"/>
        <end position="283"/>
    </location>
</feature>
<feature type="strand" evidence="12">
    <location>
        <begin position="290"/>
        <end position="295"/>
    </location>
</feature>
<feature type="helix" evidence="12">
    <location>
        <begin position="377"/>
        <end position="393"/>
    </location>
</feature>
<feature type="helix" evidence="12">
    <location>
        <begin position="402"/>
        <end position="411"/>
    </location>
</feature>
<feature type="helix" evidence="12">
    <location>
        <begin position="421"/>
        <end position="432"/>
    </location>
</feature>
<feature type="helix" evidence="12">
    <location>
        <begin position="436"/>
        <end position="442"/>
    </location>
</feature>
<feature type="helix" evidence="12">
    <location>
        <begin position="454"/>
        <end position="458"/>
    </location>
</feature>
<feature type="turn" evidence="13">
    <location>
        <begin position="460"/>
        <end position="462"/>
    </location>
</feature>
<feature type="helix" evidence="12">
    <location>
        <begin position="464"/>
        <end position="466"/>
    </location>
</feature>
<feature type="turn" evidence="12">
    <location>
        <begin position="469"/>
        <end position="471"/>
    </location>
</feature>
<feature type="strand" evidence="13">
    <location>
        <begin position="477"/>
        <end position="480"/>
    </location>
</feature>
<feature type="helix" evidence="12">
    <location>
        <begin position="486"/>
        <end position="498"/>
    </location>
</feature>
<feature type="helix" evidence="12">
    <location>
        <begin position="502"/>
        <end position="514"/>
    </location>
</feature>
<feature type="strand" evidence="12">
    <location>
        <begin position="515"/>
        <end position="517"/>
    </location>
</feature>
<feature type="turn" evidence="12">
    <location>
        <begin position="519"/>
        <end position="521"/>
    </location>
</feature>
<feature type="helix" evidence="12">
    <location>
        <begin position="525"/>
        <end position="528"/>
    </location>
</feature>
<feature type="helix" evidence="12">
    <location>
        <begin position="533"/>
        <end position="545"/>
    </location>
</feature>
<feature type="helix" evidence="12">
    <location>
        <begin position="547"/>
        <end position="556"/>
    </location>
</feature>
<feature type="turn" evidence="12">
    <location>
        <begin position="558"/>
        <end position="561"/>
    </location>
</feature>
<feature type="helix" evidence="12">
    <location>
        <begin position="562"/>
        <end position="586"/>
    </location>
</feature>
<feature type="helix" evidence="12">
    <location>
        <begin position="594"/>
        <end position="617"/>
    </location>
</feature>
<feature type="strand" evidence="12">
    <location>
        <begin position="620"/>
        <end position="622"/>
    </location>
</feature>
<feature type="helix" evidence="12">
    <location>
        <begin position="623"/>
        <end position="640"/>
    </location>
</feature>
<feature type="helix" evidence="12">
    <location>
        <begin position="647"/>
        <end position="661"/>
    </location>
</feature>
<feature type="strand" evidence="12">
    <location>
        <begin position="662"/>
        <end position="664"/>
    </location>
</feature>
<feature type="strand" evidence="12">
    <location>
        <begin position="671"/>
        <end position="673"/>
    </location>
</feature>
<feature type="helix" evidence="12">
    <location>
        <begin position="681"/>
        <end position="702"/>
    </location>
</feature>
<feature type="turn" evidence="12">
    <location>
        <begin position="706"/>
        <end position="708"/>
    </location>
</feature>
<feature type="helix" evidence="12">
    <location>
        <begin position="709"/>
        <end position="727"/>
    </location>
</feature>
<feature type="helix" evidence="12">
    <location>
        <begin position="738"/>
        <end position="744"/>
    </location>
</feature>
<feature type="strand" evidence="12">
    <location>
        <begin position="745"/>
        <end position="747"/>
    </location>
</feature>
<feature type="helix" evidence="12">
    <location>
        <begin position="749"/>
        <end position="764"/>
    </location>
</feature>
<feature type="helix" evidence="12">
    <location>
        <begin position="769"/>
        <end position="787"/>
    </location>
</feature>
<feature type="helix" evidence="12">
    <location>
        <begin position="790"/>
        <end position="793"/>
    </location>
</feature>
<feature type="helix" evidence="12">
    <location>
        <begin position="797"/>
        <end position="824"/>
    </location>
</feature>
<feature type="helix" evidence="12">
    <location>
        <begin position="836"/>
        <end position="861"/>
    </location>
</feature>
<feature type="helix" evidence="12">
    <location>
        <begin position="868"/>
        <end position="871"/>
    </location>
</feature>
<feature type="helix" evidence="12">
    <location>
        <begin position="873"/>
        <end position="901"/>
    </location>
</feature>
<feature type="helix" evidence="13">
    <location>
        <begin position="903"/>
        <end position="924"/>
    </location>
</feature>
<feature type="helix" evidence="13">
    <location>
        <begin position="929"/>
        <end position="932"/>
    </location>
</feature>
<feature type="helix" evidence="13">
    <location>
        <begin position="933"/>
        <end position="942"/>
    </location>
</feature>
<feature type="helix" evidence="13">
    <location>
        <begin position="948"/>
        <end position="960"/>
    </location>
</feature>
<feature type="helix" evidence="13">
    <location>
        <begin position="985"/>
        <end position="999"/>
    </location>
</feature>
<feature type="turn" evidence="13">
    <location>
        <begin position="1000"/>
        <end position="1002"/>
    </location>
</feature>
<feature type="turn" evidence="13">
    <location>
        <begin position="1005"/>
        <end position="1007"/>
    </location>
</feature>
<feature type="helix" evidence="13">
    <location>
        <begin position="1015"/>
        <end position="1025"/>
    </location>
</feature>
<feature type="helix" evidence="13">
    <location>
        <begin position="1034"/>
        <end position="1048"/>
    </location>
</feature>
<feature type="helix" evidence="13">
    <location>
        <begin position="1053"/>
        <end position="1060"/>
    </location>
</feature>
<feature type="helix" evidence="13">
    <location>
        <begin position="1076"/>
        <end position="1080"/>
    </location>
</feature>
<feature type="helix" evidence="13">
    <location>
        <begin position="1083"/>
        <end position="1100"/>
    </location>
</feature>
<feature type="helix" evidence="13">
    <location>
        <begin position="1106"/>
        <end position="1108"/>
    </location>
</feature>
<feature type="helix" evidence="13">
    <location>
        <begin position="1109"/>
        <end position="1120"/>
    </location>
</feature>
<feature type="helix" evidence="13">
    <location>
        <begin position="1127"/>
        <end position="1147"/>
    </location>
</feature>
<feature type="helix" evidence="13">
    <location>
        <begin position="1149"/>
        <end position="1153"/>
    </location>
</feature>
<feature type="helix" evidence="13">
    <location>
        <begin position="1155"/>
        <end position="1181"/>
    </location>
</feature>
<feature type="helix" evidence="13">
    <location>
        <begin position="1187"/>
        <end position="1208"/>
    </location>
</feature>
<feature type="turn" evidence="13">
    <location>
        <begin position="1210"/>
        <end position="1212"/>
    </location>
</feature>
<feature type="helix" evidence="13">
    <location>
        <begin position="1215"/>
        <end position="1217"/>
    </location>
</feature>
<feature type="strand" evidence="13">
    <location>
        <begin position="1225"/>
        <end position="1229"/>
    </location>
</feature>
<feature type="strand" evidence="13">
    <location>
        <begin position="1235"/>
        <end position="1239"/>
    </location>
</feature>
<feature type="helix" evidence="13">
    <location>
        <begin position="1248"/>
        <end position="1272"/>
    </location>
</feature>
<feature type="helix" evidence="13">
    <location>
        <begin position="1281"/>
        <end position="1290"/>
    </location>
</feature>
<feature type="turn" evidence="13">
    <location>
        <begin position="1291"/>
        <end position="1294"/>
    </location>
</feature>
<feature type="helix" evidence="13">
    <location>
        <begin position="1299"/>
        <end position="1302"/>
    </location>
</feature>
<feature type="turn" evidence="13">
    <location>
        <begin position="1303"/>
        <end position="1305"/>
    </location>
</feature>
<feature type="helix" evidence="13">
    <location>
        <begin position="1306"/>
        <end position="1315"/>
    </location>
</feature>
<feature type="strand" evidence="13">
    <location>
        <begin position="1319"/>
        <end position="1321"/>
    </location>
</feature>
<feature type="helix" evidence="13">
    <location>
        <begin position="1324"/>
        <end position="1339"/>
    </location>
</feature>
<feature type="helix" evidence="13">
    <location>
        <begin position="1345"/>
        <end position="1354"/>
    </location>
</feature>
<feature type="helix" evidence="13">
    <location>
        <begin position="1356"/>
        <end position="1359"/>
    </location>
</feature>
<feature type="turn" evidence="13">
    <location>
        <begin position="1363"/>
        <end position="1366"/>
    </location>
</feature>
<feature type="helix" evidence="13">
    <location>
        <begin position="1374"/>
        <end position="1394"/>
    </location>
</feature>
<feature type="helix" evidence="13">
    <location>
        <begin position="1402"/>
        <end position="1414"/>
    </location>
</feature>
<feature type="helix" evidence="13">
    <location>
        <begin position="1419"/>
        <end position="1429"/>
    </location>
</feature>
<feature type="strand" evidence="13">
    <location>
        <begin position="1435"/>
        <end position="1437"/>
    </location>
</feature>
<feature type="strand" evidence="13">
    <location>
        <begin position="1450"/>
        <end position="1452"/>
    </location>
</feature>
<feature type="turn" evidence="13">
    <location>
        <begin position="1453"/>
        <end position="1455"/>
    </location>
</feature>
<feature type="helix" evidence="13">
    <location>
        <begin position="1456"/>
        <end position="1471"/>
    </location>
</feature>
<feature type="helix" evidence="13">
    <location>
        <begin position="1475"/>
        <end position="1485"/>
    </location>
</feature>
<feature type="helix" evidence="13">
    <location>
        <begin position="1494"/>
        <end position="1512"/>
    </location>
</feature>
<feature type="turn" evidence="13">
    <location>
        <begin position="1517"/>
        <end position="1523"/>
    </location>
</feature>
<feature type="helix" evidence="13">
    <location>
        <begin position="1524"/>
        <end position="1527"/>
    </location>
</feature>
<feature type="helix" evidence="13">
    <location>
        <begin position="1530"/>
        <end position="1543"/>
    </location>
</feature>
<feature type="helix" evidence="13">
    <location>
        <begin position="1546"/>
        <end position="1548"/>
    </location>
</feature>
<feature type="helix" evidence="13">
    <location>
        <begin position="1551"/>
        <end position="1566"/>
    </location>
</feature>
<feature type="helix" evidence="13">
    <location>
        <begin position="1570"/>
        <end position="1572"/>
    </location>
</feature>
<feature type="helix" evidence="13">
    <location>
        <begin position="1573"/>
        <end position="1583"/>
    </location>
</feature>
<feature type="helix" evidence="13">
    <location>
        <begin position="1586"/>
        <end position="1591"/>
    </location>
</feature>
<feature type="helix" evidence="13">
    <location>
        <begin position="1634"/>
        <end position="1647"/>
    </location>
</feature>
<sequence length="1648" mass="191680">MSMFNALNSNIEGEQYEAEEHSRELQIEQSFNILQDALIDLKNKDFEKSDSKFQELFQIDVVKPDRWGMYRNSSPTLDNLRYLCYRNRGMYYHLYLENNYERLNSQELVNCILKAVENLVESIQHSDADFAVTDLLARIFKSFNSVKLERLISEYEFTKQENLSLLLGRHRKFLLNDLTLMMNNYVELTNKLLVPNLSDNTIFERYHLEKYKDIKPEPLAFGPILSRISEMKKQDEEIMKKLDVFNVTLNEESWDEVAKALKNLLPSVKTSSLIGRNMDPYNEIEEPIEAVKFELSEAINNTPSLDRESERQEEEQDNESVRADDKSGNLAPSDIQTNEEARPNKRTDEHIDSTKPLQRSSKRFKEREQENSKELVMDVHKRFFGEFNTLLSYIHILPFCDFDTFASKFIIGSSDKQPEKFIPYTDLYECLKSWSSRYTDIFNQNDYLSSGSNENEELFQLNALLKSNAFDDKESFPRYLNDLDSDHIRSFISEVNAGNLHFHQVRLKLLFKLLGTYDEGNGRRLIIDYLWESQLLKIVLWFVFGIESNIFALINKNKRQCKYLALSIYELLVNHLGNIVEEITNKRIQGHKSADLKSQRNKVEKRIRSWHTLLEQIADEKDKELYVHFQWTHYCFLQYTCDIVDSRLSETLTSLENTIKDSDSSLDIAYPNYRHIPALNLNTVQSQKRKIRIIQNITVEDISEDTNSDTHSENHLETLEKVLLHILHPSTNHSNIDEEMVSFIFNSPFLLKIRLWGVLFSSYVKKSSIQDVQRIYFHVLDFMKGALTSPVYKESNPHGRHQMLLTVLTAIGYLSSQLTAILNSNRWESSDFVLEDYMFEKLLQTFFFFYTVLFYESSAVNDVSNKSFFKRASKSSGKMKDIMIDLATLILYYYDLQAKLRTPAEQGIETTELIWSLHTLFGHFHFCDASNGKFLDLAEKLLCQFINNDSFLQLKQILWCRYHYAIASDNFSPDLHDTKAVEMEKIHSLPLGTYLIKLQYQNKNPYLSSSKTTLKQIMDNIIEKIGDPSTLDNHIISRNSFLLNEYLSRPITADLLKHTFSGATSLYLTSPNDELQQGMTAGLFYVSSLQSLGLYKMRKKSMQARPSELDSIIRMLKNDIIYNTNRFESWILLGKCYSYIVEDDLIWTSDKITVPEKKDVIALTQRKAILCYLMAISIYYSKLDRTIDDKKIILEALDDLGSMLISGYYNPMNKLCFSWKSSAENTMRLSETGEVVMEKTKKITTISDFNIEQSIFLCFNRACSLSGDIKSQDDVFVLNWSSFYNLAKFFFKTDGGNNCKLVAKYITQGCQIAYESSPAKDPIIEPHYLLVNACYKWVKRGVIGVNEALTLLSKDNQFFQEQEEFWVNDEGLAWDYQEKFFFDKIIRLLRHLLSVDKKKWQHRPRYRIARILFDDLGDVNGALEEMDSLISAKSINKNLVNIWKPDFERPGKHFIYTYQYLVLYLDLLFAIKDFNTTGLVIKKLRRFGSGTVNVNELLERAINVYTQSAKIKLQLQDKSYVEQILPTLNYQEFLKISEQLNQVFDQGKYPEEISSGLKLAFQLKKGHSGIAFDSVCLGIYFEYLYFPLARQDQSLTDVNDENNPALPSSGSVTSKSTPDPTSKPSAIKKRVTKKEVFDRVRLLVDKIT</sequence>
<accession>P47171</accession>
<accession>D6VWV9</accession>
<evidence type="ECO:0000256" key="1">
    <source>
        <dbReference type="SAM" id="MobiDB-lite"/>
    </source>
</evidence>
<evidence type="ECO:0000269" key="2">
    <source>
    </source>
</evidence>
<evidence type="ECO:0000269" key="3">
    <source>
    </source>
</evidence>
<evidence type="ECO:0000269" key="4">
    <source>
    </source>
</evidence>
<evidence type="ECO:0000269" key="5">
    <source>
    </source>
</evidence>
<evidence type="ECO:0000269" key="6">
    <source>
    </source>
</evidence>
<evidence type="ECO:0000269" key="7">
    <source>
    </source>
</evidence>
<evidence type="ECO:0000269" key="8">
    <source>
    </source>
</evidence>
<evidence type="ECO:0000305" key="9"/>
<evidence type="ECO:0007744" key="10">
    <source>
    </source>
</evidence>
<evidence type="ECO:0007744" key="11">
    <source>
    </source>
</evidence>
<evidence type="ECO:0007829" key="12">
    <source>
        <dbReference type="PDB" id="8GHL"/>
    </source>
</evidence>
<evidence type="ECO:0007829" key="13">
    <source>
        <dbReference type="PDB" id="8GHN"/>
    </source>
</evidence>
<keyword id="KW-0002">3D-structure</keyword>
<keyword id="KW-0158">Chromosome</keyword>
<keyword id="KW-0539">Nucleus</keyword>
<keyword id="KW-0597">Phosphoprotein</keyword>
<keyword id="KW-1185">Reference proteome</keyword>
<keyword id="KW-0678">Repressor</keyword>
<keyword id="KW-0804">Transcription</keyword>
<keyword id="KW-0805">Transcription regulation</keyword>